<proteinExistence type="inferred from homology"/>
<gene>
    <name evidence="1" type="primary">rlmH</name>
    <name type="ordered locus">UPA3_0187</name>
</gene>
<keyword id="KW-0963">Cytoplasm</keyword>
<keyword id="KW-0489">Methyltransferase</keyword>
<keyword id="KW-0698">rRNA processing</keyword>
<keyword id="KW-0949">S-adenosyl-L-methionine</keyword>
<keyword id="KW-0808">Transferase</keyword>
<feature type="chain" id="PRO_1000082824" description="Ribosomal RNA large subunit methyltransferase H">
    <location>
        <begin position="1"/>
        <end position="159"/>
    </location>
</feature>
<feature type="binding site" evidence="1">
    <location>
        <position position="76"/>
    </location>
    <ligand>
        <name>S-adenosyl-L-methionine</name>
        <dbReference type="ChEBI" id="CHEBI:59789"/>
    </ligand>
</feature>
<feature type="binding site" evidence="1">
    <location>
        <position position="108"/>
    </location>
    <ligand>
        <name>S-adenosyl-L-methionine</name>
        <dbReference type="ChEBI" id="CHEBI:59789"/>
    </ligand>
</feature>
<feature type="binding site" evidence="1">
    <location>
        <begin position="127"/>
        <end position="132"/>
    </location>
    <ligand>
        <name>S-adenosyl-L-methionine</name>
        <dbReference type="ChEBI" id="CHEBI:59789"/>
    </ligand>
</feature>
<protein>
    <recommendedName>
        <fullName evidence="1">Ribosomal RNA large subunit methyltransferase H</fullName>
        <ecNumber evidence="1">2.1.1.177</ecNumber>
    </recommendedName>
    <alternativeName>
        <fullName evidence="1">23S rRNA (pseudouridine1915-N3)-methyltransferase</fullName>
    </alternativeName>
    <alternativeName>
        <fullName evidence="1">23S rRNA m3Psi1915 methyltransferase</fullName>
    </alternativeName>
    <alternativeName>
        <fullName evidence="1">rRNA (pseudouridine-N3-)-methyltransferase RlmH</fullName>
    </alternativeName>
</protein>
<sequence length="159" mass="18245">MMIKIISVGKLKQKAFVDLINDYLKRINHYLKCQEIVVSDEPEPVQISNKSLEQIKSKEASKIFKNINQNDFVIALIIESNIISSETLAKKIQQWLNTFSHDICFIIGGSNGLHESIYERANYHLSMSKMTFAHGLAKVMLCEQIYRALSILNNGKYHK</sequence>
<reference key="1">
    <citation type="submission" date="2008-02" db="EMBL/GenBank/DDBJ databases">
        <title>Genome sequence of Ureaplasma parvum serovar 3.</title>
        <authorList>
            <person name="Methe B.A."/>
            <person name="Glass J."/>
            <person name="Waites K."/>
            <person name="Shrivastava S."/>
        </authorList>
    </citation>
    <scope>NUCLEOTIDE SEQUENCE [LARGE SCALE GENOMIC DNA]</scope>
    <source>
        <strain>ATCC 27815 / 27 / NCTC 11736</strain>
    </source>
</reference>
<name>RLMH_UREP2</name>
<dbReference type="EC" id="2.1.1.177" evidence="1"/>
<dbReference type="EMBL" id="CP000942">
    <property type="protein sequence ID" value="ACA32822.1"/>
    <property type="molecule type" value="Genomic_DNA"/>
</dbReference>
<dbReference type="RefSeq" id="WP_006688906.1">
    <property type="nucleotide sequence ID" value="NC_010503.1"/>
</dbReference>
<dbReference type="SMR" id="B1AIG8"/>
<dbReference type="GeneID" id="29672634"/>
<dbReference type="KEGG" id="upa:UPA3_0187"/>
<dbReference type="HOGENOM" id="CLU_100552_0_0_14"/>
<dbReference type="Proteomes" id="UP000002162">
    <property type="component" value="Chromosome"/>
</dbReference>
<dbReference type="GO" id="GO:0005737">
    <property type="term" value="C:cytoplasm"/>
    <property type="evidence" value="ECO:0007669"/>
    <property type="project" value="UniProtKB-SubCell"/>
</dbReference>
<dbReference type="GO" id="GO:0070038">
    <property type="term" value="F:rRNA (pseudouridine-N3-)-methyltransferase activity"/>
    <property type="evidence" value="ECO:0007669"/>
    <property type="project" value="UniProtKB-UniRule"/>
</dbReference>
<dbReference type="CDD" id="cd18081">
    <property type="entry name" value="RlmH-like"/>
    <property type="match status" value="1"/>
</dbReference>
<dbReference type="Gene3D" id="3.40.1280.10">
    <property type="match status" value="1"/>
</dbReference>
<dbReference type="HAMAP" id="MF_00658">
    <property type="entry name" value="23SrRNA_methyltr_H"/>
    <property type="match status" value="1"/>
</dbReference>
<dbReference type="InterPro" id="IPR029028">
    <property type="entry name" value="Alpha/beta_knot_MTases"/>
</dbReference>
<dbReference type="InterPro" id="IPR003742">
    <property type="entry name" value="RlmH-like"/>
</dbReference>
<dbReference type="InterPro" id="IPR029026">
    <property type="entry name" value="tRNA_m1G_MTases_N"/>
</dbReference>
<dbReference type="PANTHER" id="PTHR33603">
    <property type="entry name" value="METHYLTRANSFERASE"/>
    <property type="match status" value="1"/>
</dbReference>
<dbReference type="PANTHER" id="PTHR33603:SF1">
    <property type="entry name" value="RIBOSOMAL RNA LARGE SUBUNIT METHYLTRANSFERASE H"/>
    <property type="match status" value="1"/>
</dbReference>
<dbReference type="Pfam" id="PF02590">
    <property type="entry name" value="SPOUT_MTase"/>
    <property type="match status" value="1"/>
</dbReference>
<dbReference type="PIRSF" id="PIRSF004505">
    <property type="entry name" value="MT_bac"/>
    <property type="match status" value="1"/>
</dbReference>
<dbReference type="SUPFAM" id="SSF75217">
    <property type="entry name" value="alpha/beta knot"/>
    <property type="match status" value="1"/>
</dbReference>
<accession>B1AIG8</accession>
<organism>
    <name type="scientific">Ureaplasma parvum serovar 3 (strain ATCC 27815 / 27 / NCTC 11736)</name>
    <dbReference type="NCBI Taxonomy" id="505682"/>
    <lineage>
        <taxon>Bacteria</taxon>
        <taxon>Bacillati</taxon>
        <taxon>Mycoplasmatota</taxon>
        <taxon>Mycoplasmoidales</taxon>
        <taxon>Mycoplasmoidaceae</taxon>
        <taxon>Ureaplasma</taxon>
    </lineage>
</organism>
<comment type="function">
    <text evidence="1">Specifically methylates the pseudouridine at position 1915 (m3Psi1915) in 23S rRNA.</text>
</comment>
<comment type="catalytic activity">
    <reaction evidence="1">
        <text>pseudouridine(1915) in 23S rRNA + S-adenosyl-L-methionine = N(3)-methylpseudouridine(1915) in 23S rRNA + S-adenosyl-L-homocysteine + H(+)</text>
        <dbReference type="Rhea" id="RHEA:42752"/>
        <dbReference type="Rhea" id="RHEA-COMP:10221"/>
        <dbReference type="Rhea" id="RHEA-COMP:10222"/>
        <dbReference type="ChEBI" id="CHEBI:15378"/>
        <dbReference type="ChEBI" id="CHEBI:57856"/>
        <dbReference type="ChEBI" id="CHEBI:59789"/>
        <dbReference type="ChEBI" id="CHEBI:65314"/>
        <dbReference type="ChEBI" id="CHEBI:74486"/>
        <dbReference type="EC" id="2.1.1.177"/>
    </reaction>
</comment>
<comment type="subunit">
    <text evidence="1">Homodimer.</text>
</comment>
<comment type="subcellular location">
    <subcellularLocation>
        <location evidence="1">Cytoplasm</location>
    </subcellularLocation>
</comment>
<comment type="similarity">
    <text evidence="1">Belongs to the RNA methyltransferase RlmH family.</text>
</comment>
<evidence type="ECO:0000255" key="1">
    <source>
        <dbReference type="HAMAP-Rule" id="MF_00658"/>
    </source>
</evidence>